<feature type="signal peptide" evidence="1">
    <location>
        <begin position="1"/>
        <end position="35"/>
    </location>
</feature>
<feature type="chain" id="PRO_5000397714" description="Lipopolysaccharide core heptose(II)-phosphate phosphatase">
    <location>
        <begin position="36"/>
        <end position="201"/>
    </location>
</feature>
<proteinExistence type="inferred from homology"/>
<dbReference type="EC" id="3.1.3.-" evidence="1"/>
<dbReference type="EMBL" id="AM933172">
    <property type="protein sequence ID" value="CAR33862.1"/>
    <property type="molecule type" value="Genomic_DNA"/>
</dbReference>
<dbReference type="SMR" id="B5R269"/>
<dbReference type="KEGG" id="set:SEN2278"/>
<dbReference type="HOGENOM" id="CLU_106705_1_0_6"/>
<dbReference type="UniPathway" id="UPA00451"/>
<dbReference type="Proteomes" id="UP000000613">
    <property type="component" value="Chromosome"/>
</dbReference>
<dbReference type="GO" id="GO:0042597">
    <property type="term" value="C:periplasmic space"/>
    <property type="evidence" value="ECO:0007669"/>
    <property type="project" value="UniProtKB-SubCell"/>
</dbReference>
<dbReference type="GO" id="GO:0016791">
    <property type="term" value="F:phosphatase activity"/>
    <property type="evidence" value="ECO:0007669"/>
    <property type="project" value="UniProtKB-UniRule"/>
</dbReference>
<dbReference type="GO" id="GO:0008653">
    <property type="term" value="P:lipopolysaccharide metabolic process"/>
    <property type="evidence" value="ECO:0007669"/>
    <property type="project" value="UniProtKB-UniRule"/>
</dbReference>
<dbReference type="CDD" id="cd07040">
    <property type="entry name" value="HP"/>
    <property type="match status" value="1"/>
</dbReference>
<dbReference type="Gene3D" id="3.40.50.1240">
    <property type="entry name" value="Phosphoglycerate mutase-like"/>
    <property type="match status" value="1"/>
</dbReference>
<dbReference type="HAMAP" id="MF_01868">
    <property type="entry name" value="Ais"/>
    <property type="match status" value="1"/>
</dbReference>
<dbReference type="InterPro" id="IPR013078">
    <property type="entry name" value="His_Pase_superF_clade-1"/>
</dbReference>
<dbReference type="InterPro" id="IPR029033">
    <property type="entry name" value="His_PPase_superfam"/>
</dbReference>
<dbReference type="InterPro" id="IPR011310">
    <property type="entry name" value="LipoPS_heptP_Pase"/>
</dbReference>
<dbReference type="NCBIfam" id="NF011945">
    <property type="entry name" value="PRK15416.1"/>
    <property type="match status" value="1"/>
</dbReference>
<dbReference type="Pfam" id="PF00300">
    <property type="entry name" value="His_Phos_1"/>
    <property type="match status" value="1"/>
</dbReference>
<dbReference type="PIRSF" id="PIRSF011416">
    <property type="entry name" value="Ais-TraG-AfrS"/>
    <property type="match status" value="1"/>
</dbReference>
<dbReference type="SUPFAM" id="SSF53254">
    <property type="entry name" value="Phosphoglycerate mutase-like"/>
    <property type="match status" value="1"/>
</dbReference>
<organism>
    <name type="scientific">Salmonella enteritidis PT4 (strain P125109)</name>
    <dbReference type="NCBI Taxonomy" id="550537"/>
    <lineage>
        <taxon>Bacteria</taxon>
        <taxon>Pseudomonadati</taxon>
        <taxon>Pseudomonadota</taxon>
        <taxon>Gammaproteobacteria</taxon>
        <taxon>Enterobacterales</taxon>
        <taxon>Enterobacteriaceae</taxon>
        <taxon>Salmonella</taxon>
    </lineage>
</organism>
<protein>
    <recommendedName>
        <fullName evidence="1">Lipopolysaccharide core heptose(II)-phosphate phosphatase</fullName>
        <ecNumber evidence="1">3.1.3.-</ecNumber>
    </recommendedName>
</protein>
<comment type="function">
    <text evidence="1">Catalyzes the dephosphorylation of heptose(II) of the outer membrane lipopolysaccharide core.</text>
</comment>
<comment type="pathway">
    <text evidence="1">Bacterial outer membrane biogenesis; lipopolysaccharide metabolism.</text>
</comment>
<comment type="subcellular location">
    <subcellularLocation>
        <location evidence="1">Periplasm</location>
    </subcellularLocation>
</comment>
<comment type="similarity">
    <text evidence="1">Belongs to the phosphoglycerate mutase family. Ais subfamily.</text>
</comment>
<sequence>MLAFTLRFIKNKRYFAILAGALVIIAGLTSQHAWSGNGLPQINGKALAALAKQHPVVVLFRHAERCDRSDNTCLSDSTGITVKGAQDARALGKAFSADIQNYNLYSSNTVRTIQSATWFSAGRSLTVDKKMMDCGSGIYASINTLLKKSQNKNIVIFTHNHCLTYIAKNKRGVKFDPDYLNALVMHAENGKLFLDGEFVPG</sequence>
<evidence type="ECO:0000255" key="1">
    <source>
        <dbReference type="HAMAP-Rule" id="MF_01868"/>
    </source>
</evidence>
<accession>B5R269</accession>
<reference key="1">
    <citation type="journal article" date="2008" name="Genome Res.">
        <title>Comparative genome analysis of Salmonella enteritidis PT4 and Salmonella gallinarum 287/91 provides insights into evolutionary and host adaptation pathways.</title>
        <authorList>
            <person name="Thomson N.R."/>
            <person name="Clayton D.J."/>
            <person name="Windhorst D."/>
            <person name="Vernikos G."/>
            <person name="Davidson S."/>
            <person name="Churcher C."/>
            <person name="Quail M.A."/>
            <person name="Stevens M."/>
            <person name="Jones M.A."/>
            <person name="Watson M."/>
            <person name="Barron A."/>
            <person name="Layton A."/>
            <person name="Pickard D."/>
            <person name="Kingsley R.A."/>
            <person name="Bignell A."/>
            <person name="Clark L."/>
            <person name="Harris B."/>
            <person name="Ormond D."/>
            <person name="Abdellah Z."/>
            <person name="Brooks K."/>
            <person name="Cherevach I."/>
            <person name="Chillingworth T."/>
            <person name="Woodward J."/>
            <person name="Norberczak H."/>
            <person name="Lord A."/>
            <person name="Arrowsmith C."/>
            <person name="Jagels K."/>
            <person name="Moule S."/>
            <person name="Mungall K."/>
            <person name="Saunders M."/>
            <person name="Whitehead S."/>
            <person name="Chabalgoity J.A."/>
            <person name="Maskell D."/>
            <person name="Humphreys T."/>
            <person name="Roberts M."/>
            <person name="Barrow P.A."/>
            <person name="Dougan G."/>
            <person name="Parkhill J."/>
        </authorList>
    </citation>
    <scope>NUCLEOTIDE SEQUENCE [LARGE SCALE GENOMIC DNA]</scope>
    <source>
        <strain>P125109</strain>
    </source>
</reference>
<keyword id="KW-0378">Hydrolase</keyword>
<keyword id="KW-0574">Periplasm</keyword>
<keyword id="KW-0732">Signal</keyword>
<gene>
    <name evidence="1" type="primary">ais</name>
    <name type="ordered locus">SEN2278</name>
</gene>
<name>AIS_SALEP</name>